<reference key="1">
    <citation type="journal article" date="2007" name="Gene">
        <title>Cloning, characterization, expression and comparative analysis of pig Golgi membrane sphingomyelin synthase 1.</title>
        <authorList>
            <person name="Guillen N."/>
            <person name="Navarro M.A."/>
            <person name="Surra J.C."/>
            <person name="Arnal C."/>
            <person name="Fernandez-Juan M."/>
            <person name="Cebrian-Perez J.A."/>
            <person name="Osada J."/>
        </authorList>
    </citation>
    <scope>NUCLEOTIDE SEQUENCE [MRNA]</scope>
    <scope>TISSUE SPECIFICITY</scope>
    <source>
        <tissue>Liver</tissue>
    </source>
</reference>
<evidence type="ECO:0000250" key="1">
    <source>
        <dbReference type="UniProtKB" id="Q86VZ5"/>
    </source>
</evidence>
<evidence type="ECO:0000250" key="2">
    <source>
        <dbReference type="UniProtKB" id="Q8VCQ6"/>
    </source>
</evidence>
<evidence type="ECO:0000255" key="3"/>
<evidence type="ECO:0000255" key="4">
    <source>
        <dbReference type="PROSITE-ProRule" id="PRU00184"/>
    </source>
</evidence>
<evidence type="ECO:0000269" key="5">
    <source>
    </source>
</evidence>
<evidence type="ECO:0000305" key="6"/>
<name>SMS1_PIG</name>
<gene>
    <name type="primary">SGMS1</name>
    <name type="synonym">SMS1</name>
</gene>
<keyword id="KW-0053">Apoptosis</keyword>
<keyword id="KW-0333">Golgi apparatus</keyword>
<keyword id="KW-0418">Kinase</keyword>
<keyword id="KW-0443">Lipid metabolism</keyword>
<keyword id="KW-0472">Membrane</keyword>
<keyword id="KW-0597">Phosphoprotein</keyword>
<keyword id="KW-1185">Reference proteome</keyword>
<keyword id="KW-0746">Sphingolipid metabolism</keyword>
<keyword id="KW-0808">Transferase</keyword>
<keyword id="KW-0812">Transmembrane</keyword>
<keyword id="KW-1133">Transmembrane helix</keyword>
<protein>
    <recommendedName>
        <fullName>Phosphatidylcholine:ceramide cholinephosphotransferase 1</fullName>
        <ecNumber evidence="1">2.7.8.27</ecNumber>
    </recommendedName>
    <alternativeName>
        <fullName>Sphingomyelin synthase 1</fullName>
    </alternativeName>
</protein>
<dbReference type="EC" id="2.7.8.27" evidence="1"/>
<dbReference type="EMBL" id="AM233751">
    <property type="protein sequence ID" value="CAJ81057.1"/>
    <property type="status" value="ALT_SEQ"/>
    <property type="molecule type" value="mRNA"/>
</dbReference>
<dbReference type="RefSeq" id="NP_001090907.1">
    <property type="nucleotide sequence ID" value="NM_001097438.2"/>
</dbReference>
<dbReference type="RefSeq" id="XP_013838963.1">
    <property type="nucleotide sequence ID" value="XM_013983509.1"/>
</dbReference>
<dbReference type="SMR" id="A0AAS4"/>
<dbReference type="FunCoup" id="A0AAS4">
    <property type="interactions" value="288"/>
</dbReference>
<dbReference type="STRING" id="9823.ENSSSCP00000049207"/>
<dbReference type="PaxDb" id="9823-ENSSSCP00000011122"/>
<dbReference type="GeneID" id="100037303"/>
<dbReference type="KEGG" id="ssc:100037303"/>
<dbReference type="CTD" id="259230"/>
<dbReference type="eggNOG" id="KOG3058">
    <property type="taxonomic scope" value="Eukaryota"/>
</dbReference>
<dbReference type="InParanoid" id="A0AAS4"/>
<dbReference type="OrthoDB" id="422827at2759"/>
<dbReference type="BRENDA" id="2.7.8.27">
    <property type="organism ID" value="6170"/>
</dbReference>
<dbReference type="Proteomes" id="UP000008227">
    <property type="component" value="Unplaced"/>
</dbReference>
<dbReference type="Proteomes" id="UP000314985">
    <property type="component" value="Unplaced"/>
</dbReference>
<dbReference type="Proteomes" id="UP000694570">
    <property type="component" value="Unplaced"/>
</dbReference>
<dbReference type="Proteomes" id="UP000694571">
    <property type="component" value="Unplaced"/>
</dbReference>
<dbReference type="Proteomes" id="UP000694720">
    <property type="component" value="Unplaced"/>
</dbReference>
<dbReference type="Proteomes" id="UP000694722">
    <property type="component" value="Unplaced"/>
</dbReference>
<dbReference type="Proteomes" id="UP000694723">
    <property type="component" value="Unplaced"/>
</dbReference>
<dbReference type="Proteomes" id="UP000694724">
    <property type="component" value="Unplaced"/>
</dbReference>
<dbReference type="Proteomes" id="UP000694725">
    <property type="component" value="Unplaced"/>
</dbReference>
<dbReference type="Proteomes" id="UP000694726">
    <property type="component" value="Unplaced"/>
</dbReference>
<dbReference type="Proteomes" id="UP000694727">
    <property type="component" value="Unplaced"/>
</dbReference>
<dbReference type="Proteomes" id="UP000694728">
    <property type="component" value="Unplaced"/>
</dbReference>
<dbReference type="GO" id="GO:0005789">
    <property type="term" value="C:endoplasmic reticulum membrane"/>
    <property type="evidence" value="ECO:0000318"/>
    <property type="project" value="GO_Central"/>
</dbReference>
<dbReference type="GO" id="GO:0000139">
    <property type="term" value="C:Golgi membrane"/>
    <property type="evidence" value="ECO:0000318"/>
    <property type="project" value="GO_Central"/>
</dbReference>
<dbReference type="GO" id="GO:0000138">
    <property type="term" value="C:Golgi trans cisterna"/>
    <property type="evidence" value="ECO:0007669"/>
    <property type="project" value="Ensembl"/>
</dbReference>
<dbReference type="GO" id="GO:0005886">
    <property type="term" value="C:plasma membrane"/>
    <property type="evidence" value="ECO:0000318"/>
    <property type="project" value="GO_Central"/>
</dbReference>
<dbReference type="GO" id="GO:0047493">
    <property type="term" value="F:ceramide cholinephosphotransferase activity"/>
    <property type="evidence" value="ECO:0000318"/>
    <property type="project" value="GO_Central"/>
</dbReference>
<dbReference type="GO" id="GO:0002950">
    <property type="term" value="F:ceramide phosphoethanolamine synthase activity"/>
    <property type="evidence" value="ECO:0007669"/>
    <property type="project" value="Ensembl"/>
</dbReference>
<dbReference type="GO" id="GO:0016301">
    <property type="term" value="F:kinase activity"/>
    <property type="evidence" value="ECO:0007669"/>
    <property type="project" value="UniProtKB-KW"/>
</dbReference>
<dbReference type="GO" id="GO:0033188">
    <property type="term" value="F:sphingomyelin synthase activity"/>
    <property type="evidence" value="ECO:0000318"/>
    <property type="project" value="GO_Central"/>
</dbReference>
<dbReference type="GO" id="GO:0006915">
    <property type="term" value="P:apoptotic process"/>
    <property type="evidence" value="ECO:0007669"/>
    <property type="project" value="UniProtKB-KW"/>
</dbReference>
<dbReference type="GO" id="GO:0046513">
    <property type="term" value="P:ceramide biosynthetic process"/>
    <property type="evidence" value="ECO:0000318"/>
    <property type="project" value="GO_Central"/>
</dbReference>
<dbReference type="GO" id="GO:0006686">
    <property type="term" value="P:sphingomyelin biosynthetic process"/>
    <property type="evidence" value="ECO:0000318"/>
    <property type="project" value="GO_Central"/>
</dbReference>
<dbReference type="CDD" id="cd01610">
    <property type="entry name" value="PAP2_like"/>
    <property type="match status" value="1"/>
</dbReference>
<dbReference type="CDD" id="cd09514">
    <property type="entry name" value="SAM_SGMS1"/>
    <property type="match status" value="1"/>
</dbReference>
<dbReference type="FunFam" id="1.10.150.50:FF:000040">
    <property type="entry name" value="Phosphatidylcholine:ceramide cholinephosphotransferase 1"/>
    <property type="match status" value="1"/>
</dbReference>
<dbReference type="Gene3D" id="1.10.150.50">
    <property type="entry name" value="Transcription Factor, Ets-1"/>
    <property type="match status" value="1"/>
</dbReference>
<dbReference type="InterPro" id="IPR001660">
    <property type="entry name" value="SAM"/>
</dbReference>
<dbReference type="InterPro" id="IPR013761">
    <property type="entry name" value="SAM/pointed_sf"/>
</dbReference>
<dbReference type="InterPro" id="IPR045221">
    <property type="entry name" value="Sphingomyelin_synth-like"/>
</dbReference>
<dbReference type="InterPro" id="IPR025749">
    <property type="entry name" value="Sphingomyelin_synth-like_dom"/>
</dbReference>
<dbReference type="PANTHER" id="PTHR21290:SF28">
    <property type="entry name" value="PHOSPHATIDYLCHOLINE:CERAMIDE CHOLINEPHOSPHOTRANSFERASE 1"/>
    <property type="match status" value="1"/>
</dbReference>
<dbReference type="PANTHER" id="PTHR21290">
    <property type="entry name" value="SPHINGOMYELIN SYNTHETASE"/>
    <property type="match status" value="1"/>
</dbReference>
<dbReference type="Pfam" id="PF14360">
    <property type="entry name" value="PAP2_C"/>
    <property type="match status" value="1"/>
</dbReference>
<dbReference type="SUPFAM" id="SSF47769">
    <property type="entry name" value="SAM/Pointed domain"/>
    <property type="match status" value="1"/>
</dbReference>
<dbReference type="PROSITE" id="PS50105">
    <property type="entry name" value="SAM_DOMAIN"/>
    <property type="match status" value="1"/>
</dbReference>
<comment type="function">
    <text evidence="1 2">Major sphingomyelin synthase at the Golgi apparatus. Catalyzes the reversible transfer of phosphocholine moiety in sphingomyelin biosynthesis: in the forward reaction transfers phosphocholine head group of phosphatidylcholine (PC) on to ceramide (CER) to form ceramide phosphocholine (sphingomyelin, SM) and diacylglycerol (DAG) as by-product, and in the reverse reaction transfers phosphocholine from SM to DAG to form PC and CER. The direction of the reaction depends on the levels of CER and DAG in Golgi membranes. Converts the newly synthesized CER, that is transported from the endoplasmic reticulum to the trans-Golgi by the Cer transport protein (CERT), to SM. Can form a heteromeric complex with glucosylceramide synthase (GCS) increasing SMS activity and reducing glucosylceramide synthesis, a critical mechanism that controls the metabolic fate of CER in the Golgi (By similarity). Does not use free phosphorylcholine or CDP-choline as donor. Can also transfer phosphoethanolamine head group of phosphatidylethanolamine (PE) on to CER to form ceramide phosphoethanolamine (CPE) (By similarity). Regulates receptor-mediated signal transduction via mitogenic DAG and proapoptotic CER, as well as via SM, a structural component of membrane rafts that serve as platforms for signal transduction and protein sorting. Plays a role in secretory transport via regulation of DAG pool at the Golgi apparatus and its downstream effects on PRKD1 (By similarity).</text>
</comment>
<comment type="catalytic activity">
    <reaction evidence="1">
        <text>an N-acylsphing-4-enine + a 1,2-diacyl-sn-glycero-3-phosphocholine = a sphingomyelin + a 1,2-diacyl-sn-glycerol</text>
        <dbReference type="Rhea" id="RHEA:18765"/>
        <dbReference type="ChEBI" id="CHEBI:17636"/>
        <dbReference type="ChEBI" id="CHEBI:17815"/>
        <dbReference type="ChEBI" id="CHEBI:52639"/>
        <dbReference type="ChEBI" id="CHEBI:57643"/>
        <dbReference type="EC" id="2.7.8.27"/>
    </reaction>
    <physiologicalReaction direction="left-to-right" evidence="1">
        <dbReference type="Rhea" id="RHEA:18766"/>
    </physiologicalReaction>
    <physiologicalReaction direction="right-to-left" evidence="1">
        <dbReference type="Rhea" id="RHEA:18767"/>
    </physiologicalReaction>
</comment>
<comment type="catalytic activity">
    <reaction evidence="1">
        <text>1-(9Z-octadecenoyl)-2-acyl-sn-3-glycerol + a sphingomyelin = a 1-(9Z-octadecenoyl)-2-acyl-sn-glycero-3-phosphocholine + an N-acylsphing-4-enine</text>
        <dbReference type="Rhea" id="RHEA:43320"/>
        <dbReference type="ChEBI" id="CHEBI:17636"/>
        <dbReference type="ChEBI" id="CHEBI:52639"/>
        <dbReference type="ChEBI" id="CHEBI:78421"/>
        <dbReference type="ChEBI" id="CHEBI:82983"/>
    </reaction>
    <physiologicalReaction direction="left-to-right" evidence="1">
        <dbReference type="Rhea" id="RHEA:43321"/>
    </physiologicalReaction>
    <physiologicalReaction direction="right-to-left" evidence="1">
        <dbReference type="Rhea" id="RHEA:43322"/>
    </physiologicalReaction>
</comment>
<comment type="catalytic activity">
    <reaction evidence="1">
        <text>N-hexadecanoylsphinganine + a 1,2-diacyl-sn-glycero-3-phosphocholine = N-hexadecanoyl-sphinganine-1-phosphocholine + a 1,2-diacyl-sn-glycerol</text>
        <dbReference type="Rhea" id="RHEA:41796"/>
        <dbReference type="ChEBI" id="CHEBI:17815"/>
        <dbReference type="ChEBI" id="CHEBI:57643"/>
        <dbReference type="ChEBI" id="CHEBI:67042"/>
        <dbReference type="ChEBI" id="CHEBI:78647"/>
    </reaction>
    <physiologicalReaction direction="left-to-right" evidence="1">
        <dbReference type="Rhea" id="RHEA:41797"/>
    </physiologicalReaction>
    <physiologicalReaction direction="right-to-left" evidence="1">
        <dbReference type="Rhea" id="RHEA:41798"/>
    </physiologicalReaction>
</comment>
<comment type="catalytic activity">
    <reaction evidence="1">
        <text>N-hexadecanoyl-(4R)-hydroxysphinganine + a 1,2-diacyl-sn-glycero-3-phosphocholine = N-hexadecanoyl-(4R)-hydroxysphinganine-phosphocholine + a 1,2-diacyl-sn-glycerol</text>
        <dbReference type="Rhea" id="RHEA:42140"/>
        <dbReference type="ChEBI" id="CHEBI:17815"/>
        <dbReference type="ChEBI" id="CHEBI:57643"/>
        <dbReference type="ChEBI" id="CHEBI:65107"/>
        <dbReference type="ChEBI" id="CHEBI:78650"/>
    </reaction>
    <physiologicalReaction direction="left-to-right" evidence="1">
        <dbReference type="Rhea" id="RHEA:42141"/>
    </physiologicalReaction>
    <physiologicalReaction direction="right-to-left" evidence="1">
        <dbReference type="Rhea" id="RHEA:42142"/>
    </physiologicalReaction>
</comment>
<comment type="catalytic activity">
    <reaction evidence="2">
        <text>an N-acylsphing-4-enine + a 1,2-diacyl-sn-glycero-3-phosphoethanolamine = an N-acylsphing-4-enine 1-phosphoethanolamine + a 1,2-diacyl-sn-glycerol</text>
        <dbReference type="Rhea" id="RHEA:36079"/>
        <dbReference type="ChEBI" id="CHEBI:17815"/>
        <dbReference type="ChEBI" id="CHEBI:52639"/>
        <dbReference type="ChEBI" id="CHEBI:64612"/>
        <dbReference type="ChEBI" id="CHEBI:73203"/>
    </reaction>
    <physiologicalReaction direction="left-to-right" evidence="2">
        <dbReference type="Rhea" id="RHEA:36080"/>
    </physiologicalReaction>
</comment>
<comment type="pathway">
    <text evidence="1">Sphingolipid metabolism.</text>
</comment>
<comment type="subcellular location">
    <subcellularLocation>
        <location evidence="1">Golgi apparatus membrane</location>
        <topology evidence="3">Multi-pass membrane protein</topology>
    </subcellularLocation>
</comment>
<comment type="tissue specificity">
    <text evidence="5">Widely expressed. Highest expression in the cardiovascular system.</text>
</comment>
<comment type="similarity">
    <text evidence="6">Belongs to the sphingomyelin synthase family.</text>
</comment>
<comment type="sequence caution" evidence="6">
    <conflict type="miscellaneous discrepancy">
        <sequence resource="EMBL-CDS" id="CAJ81057"/>
    </conflict>
    <text>Unusual initiator. The initiator methionine is coded by a non-canonical CTG leucine codon.</text>
</comment>
<accession>A0AAS4</accession>
<sequence length="418" mass="48984">MSASTMKEVVYWSPKKVADWLLENAMPEYCEPLEHFTGRDLINLTQEDFTKPPLCRVSSDNGQRLLDMIETLKMEHHMEAHKNGHANGHLSIGTDVPAPDGSFSIKVKPNGMPNGYRKEMIKIPMPEPERSQYPMEWGKTFLAFLYALSCFVLTTVMISVVHERVPPKEVQPPLPDTFFDHFNRVQWAFSICEINGMILVGLWLIQWLLLKYKSIISRRFFCIVGTLYLYRCITMYVTTLPVPGMHFNCSPKLFGDWEAQLRRIMKLIAGGGLSITGSHNMCGDYLYSGHTVMLTLTYLFIKEYSPRRLWWYHWICWLLSVVGIFCILLAHDHYTVDVVVAYYITTRLFWWYHTMANQQVLKEASQMNLLARVWWYRPFQYFEKNVQGIVPRSYHWPFPWPVVHLGRQVKYSRLVNDT</sequence>
<organism>
    <name type="scientific">Sus scrofa</name>
    <name type="common">Pig</name>
    <dbReference type="NCBI Taxonomy" id="9823"/>
    <lineage>
        <taxon>Eukaryota</taxon>
        <taxon>Metazoa</taxon>
        <taxon>Chordata</taxon>
        <taxon>Craniata</taxon>
        <taxon>Vertebrata</taxon>
        <taxon>Euteleostomi</taxon>
        <taxon>Mammalia</taxon>
        <taxon>Eutheria</taxon>
        <taxon>Laurasiatheria</taxon>
        <taxon>Artiodactyla</taxon>
        <taxon>Suina</taxon>
        <taxon>Suidae</taxon>
        <taxon>Sus</taxon>
    </lineage>
</organism>
<proteinExistence type="evidence at transcript level"/>
<feature type="chain" id="PRO_0000290121" description="Phosphatidylcholine:ceramide cholinephosphotransferase 1">
    <location>
        <begin position="1"/>
        <end position="418"/>
    </location>
</feature>
<feature type="transmembrane region" description="Helical" evidence="3">
    <location>
        <begin position="141"/>
        <end position="161"/>
    </location>
</feature>
<feature type="transmembrane region" description="Helical" evidence="3">
    <location>
        <begin position="189"/>
        <end position="209"/>
    </location>
</feature>
<feature type="transmembrane region" description="Helical" evidence="3">
    <location>
        <begin position="220"/>
        <end position="240"/>
    </location>
</feature>
<feature type="transmembrane region" description="Helical" evidence="3">
    <location>
        <begin position="281"/>
        <end position="301"/>
    </location>
</feature>
<feature type="transmembrane region" description="Helical" evidence="3">
    <location>
        <begin position="309"/>
        <end position="329"/>
    </location>
</feature>
<feature type="transmembrane region" description="Helical" evidence="3">
    <location>
        <begin position="335"/>
        <end position="352"/>
    </location>
</feature>
<feature type="domain" description="SAM" evidence="4">
    <location>
        <begin position="12"/>
        <end position="75"/>
    </location>
</feature>
<feature type="active site" evidence="1">
    <location>
        <position position="290"/>
    </location>
</feature>
<feature type="active site" evidence="1">
    <location>
        <position position="333"/>
    </location>
</feature>
<feature type="active site" evidence="1">
    <location>
        <position position="337"/>
    </location>
</feature>
<feature type="modified residue" description="Phosphoserine" evidence="1">
    <location>
        <position position="13"/>
    </location>
</feature>